<accession>C0H3Z9</accession>
<feature type="chain" id="PRO_0000386655" description="Uncharacterized protein XkzA">
    <location>
        <begin position="1"/>
        <end position="90"/>
    </location>
</feature>
<sequence length="90" mass="10365">MISTIYRERTAADLKSRIDHVLLNGQKTEIVELAIDGATVTVLTKREEDIKHIETVQIFDELGNVITERKTDLDVSENRTLDFRFTFEVV</sequence>
<name>XKZA_BACSU</name>
<keyword id="KW-1185">Reference proteome</keyword>
<proteinExistence type="predicted"/>
<gene>
    <name type="primary">xkzA</name>
    <name type="ordered locus">BSU12749</name>
</gene>
<dbReference type="EMBL" id="AL009126">
    <property type="protein sequence ID" value="CAX52606.1"/>
    <property type="molecule type" value="Genomic_DNA"/>
</dbReference>
<dbReference type="RefSeq" id="WP_003232665.1">
    <property type="nucleotide sequence ID" value="NZ_OZ025638.1"/>
</dbReference>
<dbReference type="RefSeq" id="YP_003097716.1">
    <property type="nucleotide sequence ID" value="NC_000964.3"/>
</dbReference>
<dbReference type="FunCoup" id="C0H3Z9">
    <property type="interactions" value="33"/>
</dbReference>
<dbReference type="STRING" id="224308.BSU12749"/>
<dbReference type="PaxDb" id="224308-BSU12749"/>
<dbReference type="EnsemblBacteria" id="CAX52606">
    <property type="protein sequence ID" value="CAX52606"/>
    <property type="gene ID" value="BSU_12749"/>
</dbReference>
<dbReference type="GeneID" id="8303196"/>
<dbReference type="KEGG" id="bsu:BSU12749"/>
<dbReference type="PATRIC" id="fig|224308.179.peg.1382"/>
<dbReference type="eggNOG" id="ENOG5033EIE">
    <property type="taxonomic scope" value="Bacteria"/>
</dbReference>
<dbReference type="InParanoid" id="C0H3Z9"/>
<dbReference type="OrthoDB" id="2904244at2"/>
<dbReference type="BioCyc" id="BSUB:BSU12749-MONOMER"/>
<dbReference type="Proteomes" id="UP000001570">
    <property type="component" value="Chromosome"/>
</dbReference>
<organism>
    <name type="scientific">Bacillus subtilis (strain 168)</name>
    <dbReference type="NCBI Taxonomy" id="224308"/>
    <lineage>
        <taxon>Bacteria</taxon>
        <taxon>Bacillati</taxon>
        <taxon>Bacillota</taxon>
        <taxon>Bacilli</taxon>
        <taxon>Bacillales</taxon>
        <taxon>Bacillaceae</taxon>
        <taxon>Bacillus</taxon>
    </lineage>
</organism>
<reference key="1">
    <citation type="journal article" date="1997" name="Nature">
        <title>The complete genome sequence of the Gram-positive bacterium Bacillus subtilis.</title>
        <authorList>
            <person name="Kunst F."/>
            <person name="Ogasawara N."/>
            <person name="Moszer I."/>
            <person name="Albertini A.M."/>
            <person name="Alloni G."/>
            <person name="Azevedo V."/>
            <person name="Bertero M.G."/>
            <person name="Bessieres P."/>
            <person name="Bolotin A."/>
            <person name="Borchert S."/>
            <person name="Borriss R."/>
            <person name="Boursier L."/>
            <person name="Brans A."/>
            <person name="Braun M."/>
            <person name="Brignell S.C."/>
            <person name="Bron S."/>
            <person name="Brouillet S."/>
            <person name="Bruschi C.V."/>
            <person name="Caldwell B."/>
            <person name="Capuano V."/>
            <person name="Carter N.M."/>
            <person name="Choi S.-K."/>
            <person name="Codani J.-J."/>
            <person name="Connerton I.F."/>
            <person name="Cummings N.J."/>
            <person name="Daniel R.A."/>
            <person name="Denizot F."/>
            <person name="Devine K.M."/>
            <person name="Duesterhoeft A."/>
            <person name="Ehrlich S.D."/>
            <person name="Emmerson P.T."/>
            <person name="Entian K.-D."/>
            <person name="Errington J."/>
            <person name="Fabret C."/>
            <person name="Ferrari E."/>
            <person name="Foulger D."/>
            <person name="Fritz C."/>
            <person name="Fujita M."/>
            <person name="Fujita Y."/>
            <person name="Fuma S."/>
            <person name="Galizzi A."/>
            <person name="Galleron N."/>
            <person name="Ghim S.-Y."/>
            <person name="Glaser P."/>
            <person name="Goffeau A."/>
            <person name="Golightly E.J."/>
            <person name="Grandi G."/>
            <person name="Guiseppi G."/>
            <person name="Guy B.J."/>
            <person name="Haga K."/>
            <person name="Haiech J."/>
            <person name="Harwood C.R."/>
            <person name="Henaut A."/>
            <person name="Hilbert H."/>
            <person name="Holsappel S."/>
            <person name="Hosono S."/>
            <person name="Hullo M.-F."/>
            <person name="Itaya M."/>
            <person name="Jones L.-M."/>
            <person name="Joris B."/>
            <person name="Karamata D."/>
            <person name="Kasahara Y."/>
            <person name="Klaerr-Blanchard M."/>
            <person name="Klein C."/>
            <person name="Kobayashi Y."/>
            <person name="Koetter P."/>
            <person name="Koningstein G."/>
            <person name="Krogh S."/>
            <person name="Kumano M."/>
            <person name="Kurita K."/>
            <person name="Lapidus A."/>
            <person name="Lardinois S."/>
            <person name="Lauber J."/>
            <person name="Lazarevic V."/>
            <person name="Lee S.-M."/>
            <person name="Levine A."/>
            <person name="Liu H."/>
            <person name="Masuda S."/>
            <person name="Mauel C."/>
            <person name="Medigue C."/>
            <person name="Medina N."/>
            <person name="Mellado R.P."/>
            <person name="Mizuno M."/>
            <person name="Moestl D."/>
            <person name="Nakai S."/>
            <person name="Noback M."/>
            <person name="Noone D."/>
            <person name="O'Reilly M."/>
            <person name="Ogawa K."/>
            <person name="Ogiwara A."/>
            <person name="Oudega B."/>
            <person name="Park S.-H."/>
            <person name="Parro V."/>
            <person name="Pohl T.M."/>
            <person name="Portetelle D."/>
            <person name="Porwollik S."/>
            <person name="Prescott A.M."/>
            <person name="Presecan E."/>
            <person name="Pujic P."/>
            <person name="Purnelle B."/>
            <person name="Rapoport G."/>
            <person name="Rey M."/>
            <person name="Reynolds S."/>
            <person name="Rieger M."/>
            <person name="Rivolta C."/>
            <person name="Rocha E."/>
            <person name="Roche B."/>
            <person name="Rose M."/>
            <person name="Sadaie Y."/>
            <person name="Sato T."/>
            <person name="Scanlan E."/>
            <person name="Schleich S."/>
            <person name="Schroeter R."/>
            <person name="Scoffone F."/>
            <person name="Sekiguchi J."/>
            <person name="Sekowska A."/>
            <person name="Seror S.J."/>
            <person name="Serror P."/>
            <person name="Shin B.-S."/>
            <person name="Soldo B."/>
            <person name="Sorokin A."/>
            <person name="Tacconi E."/>
            <person name="Takagi T."/>
            <person name="Takahashi H."/>
            <person name="Takemaru K."/>
            <person name="Takeuchi M."/>
            <person name="Tamakoshi A."/>
            <person name="Tanaka T."/>
            <person name="Terpstra P."/>
            <person name="Tognoni A."/>
            <person name="Tosato V."/>
            <person name="Uchiyama S."/>
            <person name="Vandenbol M."/>
            <person name="Vannier F."/>
            <person name="Vassarotti A."/>
            <person name="Viari A."/>
            <person name="Wambutt R."/>
            <person name="Wedler E."/>
            <person name="Wedler H."/>
            <person name="Weitzenegger T."/>
            <person name="Winters P."/>
            <person name="Wipat A."/>
            <person name="Yamamoto H."/>
            <person name="Yamane K."/>
            <person name="Yasumoto K."/>
            <person name="Yata K."/>
            <person name="Yoshida K."/>
            <person name="Yoshikawa H.-F."/>
            <person name="Zumstein E."/>
            <person name="Yoshikawa H."/>
            <person name="Danchin A."/>
        </authorList>
    </citation>
    <scope>NUCLEOTIDE SEQUENCE [LARGE SCALE GENOMIC DNA]</scope>
    <source>
        <strain>168</strain>
    </source>
</reference>
<protein>
    <recommendedName>
        <fullName>Uncharacterized protein XkzA</fullName>
    </recommendedName>
</protein>